<proteinExistence type="evidence at protein level"/>
<accession>Q06704</accession>
<accession>D6VYV3</accession>
<gene>
    <name type="primary">IMH1</name>
    <name type="synonym">SYS3</name>
    <name type="ordered locus">YLR309C</name>
</gene>
<comment type="function">
    <text evidence="10 11">Involved in vesicular transport between an endosomal compartment and the Golgi apparatus.</text>
</comment>
<comment type="subunit">
    <text evidence="7 8 11">Forms oligomers and is present in high-molecular-mass complexes. Interacts with ARL1.</text>
</comment>
<comment type="interaction">
    <interactant intactId="EBI-33343">
        <id>Q06704</id>
    </interactant>
    <interactant intactId="EBI-2869">
        <id>P38116</id>
        <label>ARL1</label>
    </interactant>
    <organismsDiffer>false</organismsDiffer>
    <experiments>3</experiments>
</comment>
<comment type="subcellular location">
    <subcellularLocation>
        <location>Cytoplasm</location>
    </subcellularLocation>
    <subcellularLocation>
        <location>Golgi apparatus membrane</location>
        <topology>Peripheral membrane protein</topology>
    </subcellularLocation>
    <text>IMH1 is recruited to the Golgi apparatus by ARL1.</text>
</comment>
<comment type="induction">
    <text evidence="6">By cold.</text>
</comment>
<comment type="domain">
    <text evidence="4 5">The GRIP domain may serve as a Golgi targeting domain through its interaction with the ARL1 Golgi protein.</text>
</comment>
<comment type="miscellaneous">
    <text evidence="9">Present with 2350 molecules/cell in log phase SD medium.</text>
</comment>
<organism>
    <name type="scientific">Saccharomyces cerevisiae (strain ATCC 204508 / S288c)</name>
    <name type="common">Baker's yeast</name>
    <dbReference type="NCBI Taxonomy" id="559292"/>
    <lineage>
        <taxon>Eukaryota</taxon>
        <taxon>Fungi</taxon>
        <taxon>Dikarya</taxon>
        <taxon>Ascomycota</taxon>
        <taxon>Saccharomycotina</taxon>
        <taxon>Saccharomycetes</taxon>
        <taxon>Saccharomycetales</taxon>
        <taxon>Saccharomycetaceae</taxon>
        <taxon>Saccharomyces</taxon>
    </lineage>
</organism>
<sequence length="911" mass="105225">MFKQLSQIGKNLTDELAKGLADDMSPTPSEQQIEDDKSGLPKEIQAKLRKFEKYEQKYPLLLSAYKNEKLKSEKLEAVEKILAENTPISNIDDAVDTLPAFFQDLNNKNNLLNDEIKRLTKQNSEIPESASSETLKDKEEEFLKKEQNYKNDIDDLKKKMEALNIELDTVQKEKNDTVSGLREKIVALENILKEEREAKKQKEEVSISELKEELAIKNHSLEDSRMKITELEQNLSSKSTIMEEKSSELAELNITLKEKERKLSELEKKMKELPKAISHQNVGNNNRRKKNRNKGKKNKGGITTGDISEEETVDNSINTEEYDKLKENLQELQEKYKDCEDWKQKYEDIEAELKDAKELENSQLEKSAKELETLNTELIDTKKSLKEKNSELEEVRDMLRTVGNELVDAKDEIKESSSKQNEEVKTVKLELDDLRHKNATMIEAYEAKNTELRSKIELLSKKVEHLKNLCTEKEKEQTTSQNKVAKLNEEISQLTYEKSNITKELTSLRTSYKQKEKTVSYLEEQVKQFSEQKDVAEKSTEQLRKDHAKISNRLDLLKKENETLHNDIAKNSNSYEEYLKENGKLSERLNILQEKYNTLQNVKSNSNEHIDSIKRQCEELNVKLKESTKKILSLEDELNEYANIVQDKTREANTLRRLVSDSQTDDSSKQKELENKLAYLTDEKNKLEAELDLQTSRKATELQEWKHTVTELKSEIHALKLREEGLKSEVDALKHVNNDIKRKTQATSDDSDQLEQITSNLKLSLSKADEKNFELQSANEKLLNLNNELNKKFDRLLKNYRSLSSQLNALKERQYSDKSGRVSRSGSIGTLANANIDSSPANNSNPTKLEKIRSSSSLELDSEKNEKIAYIKNVLLGFLEHKEQRNQLLPVISMLLQLDSTDEKRLVMSLK</sequence>
<dbReference type="EMBL" id="U17247">
    <property type="protein sequence ID" value="AAB67359.1"/>
    <property type="molecule type" value="Genomic_DNA"/>
</dbReference>
<dbReference type="EMBL" id="BK006945">
    <property type="protein sequence ID" value="DAA09619.1"/>
    <property type="molecule type" value="Genomic_DNA"/>
</dbReference>
<dbReference type="PIR" id="S51441">
    <property type="entry name" value="S51441"/>
</dbReference>
<dbReference type="RefSeq" id="NP_013412.1">
    <property type="nucleotide sequence ID" value="NM_001182197.2"/>
</dbReference>
<dbReference type="SMR" id="Q06704"/>
<dbReference type="BioGRID" id="31574">
    <property type="interactions" value="125"/>
</dbReference>
<dbReference type="DIP" id="DIP-5583N"/>
<dbReference type="FunCoup" id="Q06704">
    <property type="interactions" value="158"/>
</dbReference>
<dbReference type="IntAct" id="Q06704">
    <property type="interactions" value="10"/>
</dbReference>
<dbReference type="MINT" id="Q06704"/>
<dbReference type="STRING" id="4932.YLR309C"/>
<dbReference type="GlyGen" id="Q06704">
    <property type="glycosylation" value="3 sites, 1 O-linked glycan (2 sites)"/>
</dbReference>
<dbReference type="iPTMnet" id="Q06704"/>
<dbReference type="PaxDb" id="4932-YLR309C"/>
<dbReference type="PeptideAtlas" id="Q06704"/>
<dbReference type="EnsemblFungi" id="YLR309C_mRNA">
    <property type="protein sequence ID" value="YLR309C"/>
    <property type="gene ID" value="YLR309C"/>
</dbReference>
<dbReference type="GeneID" id="851018"/>
<dbReference type="KEGG" id="sce:YLR309C"/>
<dbReference type="AGR" id="SGD:S000004300"/>
<dbReference type="SGD" id="S000004300">
    <property type="gene designation" value="IMH1"/>
</dbReference>
<dbReference type="VEuPathDB" id="FungiDB:YLR309C"/>
<dbReference type="eggNOG" id="ENOG502S0A5">
    <property type="taxonomic scope" value="Eukaryota"/>
</dbReference>
<dbReference type="HOGENOM" id="CLU_006987_0_0_1"/>
<dbReference type="InParanoid" id="Q06704"/>
<dbReference type="OMA" id="NIGQDHV"/>
<dbReference type="OrthoDB" id="1926336at2759"/>
<dbReference type="BioCyc" id="YEAST:G3O-32395-MONOMER"/>
<dbReference type="Reactome" id="R-SCE-6811440">
    <property type="pathway name" value="Retrograde transport at the Trans-Golgi-Network"/>
</dbReference>
<dbReference type="BioGRID-ORCS" id="851018">
    <property type="hits" value="0 hits in 10 CRISPR screens"/>
</dbReference>
<dbReference type="PRO" id="PR:Q06704"/>
<dbReference type="Proteomes" id="UP000002311">
    <property type="component" value="Chromosome XII"/>
</dbReference>
<dbReference type="RNAct" id="Q06704">
    <property type="molecule type" value="protein"/>
</dbReference>
<dbReference type="GO" id="GO:0005829">
    <property type="term" value="C:cytosol"/>
    <property type="evidence" value="ECO:0000314"/>
    <property type="project" value="SGD"/>
</dbReference>
<dbReference type="GO" id="GO:0005794">
    <property type="term" value="C:Golgi apparatus"/>
    <property type="evidence" value="ECO:0000314"/>
    <property type="project" value="SGD"/>
</dbReference>
<dbReference type="GO" id="GO:0000139">
    <property type="term" value="C:Golgi membrane"/>
    <property type="evidence" value="ECO:0007669"/>
    <property type="project" value="UniProtKB-SubCell"/>
</dbReference>
<dbReference type="GO" id="GO:0043001">
    <property type="term" value="P:Golgi to plasma membrane protein transport"/>
    <property type="evidence" value="ECO:0000315"/>
    <property type="project" value="SGD"/>
</dbReference>
<dbReference type="GO" id="GO:0034976">
    <property type="term" value="P:response to endoplasmic reticulum stress"/>
    <property type="evidence" value="ECO:0000315"/>
    <property type="project" value="SGD"/>
</dbReference>
<dbReference type="GO" id="GO:0016192">
    <property type="term" value="P:vesicle-mediated transport"/>
    <property type="evidence" value="ECO:0000315"/>
    <property type="project" value="SGD"/>
</dbReference>
<dbReference type="InterPro" id="IPR051952">
    <property type="entry name" value="Golgi-autophagy_related"/>
</dbReference>
<dbReference type="InterPro" id="IPR000237">
    <property type="entry name" value="GRIP_dom"/>
</dbReference>
<dbReference type="PANTHER" id="PTHR23157">
    <property type="entry name" value="GRIP AND COILED-COIL DOMAIN-CONTAINING PROTEIN 1"/>
    <property type="match status" value="1"/>
</dbReference>
<dbReference type="PANTHER" id="PTHR23157:SF25">
    <property type="entry name" value="GRIP AND COILED-COIL DOMAIN-CONTAINING PROTEIN 1"/>
    <property type="match status" value="1"/>
</dbReference>
<dbReference type="Pfam" id="PF01465">
    <property type="entry name" value="GRIP"/>
    <property type="match status" value="1"/>
</dbReference>
<dbReference type="SMART" id="SM00755">
    <property type="entry name" value="Grip"/>
    <property type="match status" value="1"/>
</dbReference>
<dbReference type="PROSITE" id="PS50913">
    <property type="entry name" value="GRIP"/>
    <property type="match status" value="1"/>
</dbReference>
<feature type="chain" id="PRO_0000240370" description="Golgin IMH1">
    <location>
        <begin position="1"/>
        <end position="911"/>
    </location>
</feature>
<feature type="domain" description="GRIP" evidence="2">
    <location>
        <begin position="861"/>
        <end position="909"/>
    </location>
</feature>
<feature type="region of interest" description="Disordered" evidence="3">
    <location>
        <begin position="16"/>
        <end position="41"/>
    </location>
</feature>
<feature type="region of interest" description="Disordered" evidence="3">
    <location>
        <begin position="271"/>
        <end position="314"/>
    </location>
</feature>
<feature type="region of interest" description="Disordered" evidence="3">
    <location>
        <begin position="814"/>
        <end position="850"/>
    </location>
</feature>
<feature type="coiled-coil region" evidence="1">
    <location>
        <begin position="101"/>
        <end position="280"/>
    </location>
</feature>
<feature type="coiled-coil region" evidence="1">
    <location>
        <begin position="312"/>
        <end position="735"/>
    </location>
</feature>
<feature type="coiled-coil region" evidence="1">
    <location>
        <begin position="766"/>
        <end position="814"/>
    </location>
</feature>
<feature type="compositionally biased region" description="Basic residues" evidence="3">
    <location>
        <begin position="286"/>
        <end position="299"/>
    </location>
</feature>
<feature type="compositionally biased region" description="Polar residues" evidence="3">
    <location>
        <begin position="822"/>
        <end position="847"/>
    </location>
</feature>
<feature type="modified residue" description="Phosphoserine" evidence="13 14 15">
    <location>
        <position position="308"/>
    </location>
</feature>
<feature type="modified residue" description="Phosphoserine" evidence="14">
    <location>
        <position position="660"/>
    </location>
</feature>
<feature type="modified residue" description="Phosphoserine" evidence="12 15">
    <location>
        <position position="827"/>
    </location>
</feature>
<feature type="modified residue" description="Phosphothreonine" evidence="15">
    <location>
        <position position="830"/>
    </location>
</feature>
<feature type="mutagenesis site" description="Impairs interaction with ARL1 and Golgi localization." evidence="8">
    <original>Y</original>
    <variation>A</variation>
    <location>
        <position position="870"/>
    </location>
</feature>
<keyword id="KW-0175">Coiled coil</keyword>
<keyword id="KW-0963">Cytoplasm</keyword>
<keyword id="KW-0333">Golgi apparatus</keyword>
<keyword id="KW-0472">Membrane</keyword>
<keyword id="KW-0597">Phosphoprotein</keyword>
<keyword id="KW-0653">Protein transport</keyword>
<keyword id="KW-1185">Reference proteome</keyword>
<keyword id="KW-0346">Stress response</keyword>
<keyword id="KW-0813">Transport</keyword>
<protein>
    <recommendedName>
        <fullName>Golgin IMH1</fullName>
    </recommendedName>
    <alternativeName>
        <fullName>Integrins and myosins homology protein 1</fullName>
    </alternativeName>
</protein>
<reference key="1">
    <citation type="journal article" date="1997" name="Nature">
        <title>The nucleotide sequence of Saccharomyces cerevisiae chromosome XII.</title>
        <authorList>
            <person name="Johnston M."/>
            <person name="Hillier L.W."/>
            <person name="Riles L."/>
            <person name="Albermann K."/>
            <person name="Andre B."/>
            <person name="Ansorge W."/>
            <person name="Benes V."/>
            <person name="Brueckner M."/>
            <person name="Delius H."/>
            <person name="Dubois E."/>
            <person name="Duesterhoeft A."/>
            <person name="Entian K.-D."/>
            <person name="Floeth M."/>
            <person name="Goffeau A."/>
            <person name="Hebling U."/>
            <person name="Heumann K."/>
            <person name="Heuss-Neitzel D."/>
            <person name="Hilbert H."/>
            <person name="Hilger F."/>
            <person name="Kleine K."/>
            <person name="Koetter P."/>
            <person name="Louis E.J."/>
            <person name="Messenguy F."/>
            <person name="Mewes H.-W."/>
            <person name="Miosga T."/>
            <person name="Moestl D."/>
            <person name="Mueller-Auer S."/>
            <person name="Nentwich U."/>
            <person name="Obermaier B."/>
            <person name="Piravandi E."/>
            <person name="Pohl T.M."/>
            <person name="Portetelle D."/>
            <person name="Purnelle B."/>
            <person name="Rechmann S."/>
            <person name="Rieger M."/>
            <person name="Rinke M."/>
            <person name="Rose M."/>
            <person name="Scharfe M."/>
            <person name="Scherens B."/>
            <person name="Scholler P."/>
            <person name="Schwager C."/>
            <person name="Schwarz S."/>
            <person name="Underwood A.P."/>
            <person name="Urrestarazu L.A."/>
            <person name="Vandenbol M."/>
            <person name="Verhasselt P."/>
            <person name="Vierendeels F."/>
            <person name="Voet M."/>
            <person name="Volckaert G."/>
            <person name="Voss H."/>
            <person name="Wambutt R."/>
            <person name="Wedler E."/>
            <person name="Wedler H."/>
            <person name="Zimmermann F.K."/>
            <person name="Zollner A."/>
            <person name="Hani J."/>
            <person name="Hoheisel J.D."/>
        </authorList>
    </citation>
    <scope>NUCLEOTIDE SEQUENCE [LARGE SCALE GENOMIC DNA]</scope>
    <source>
        <strain>ATCC 204508 / S288c</strain>
    </source>
</reference>
<reference key="2">
    <citation type="journal article" date="2014" name="G3 (Bethesda)">
        <title>The reference genome sequence of Saccharomyces cerevisiae: Then and now.</title>
        <authorList>
            <person name="Engel S.R."/>
            <person name="Dietrich F.S."/>
            <person name="Fisk D.G."/>
            <person name="Binkley G."/>
            <person name="Balakrishnan R."/>
            <person name="Costanzo M.C."/>
            <person name="Dwight S.S."/>
            <person name="Hitz B.C."/>
            <person name="Karra K."/>
            <person name="Nash R.S."/>
            <person name="Weng S."/>
            <person name="Wong E.D."/>
            <person name="Lloyd P."/>
            <person name="Skrzypek M.S."/>
            <person name="Miyasato S.R."/>
            <person name="Simison M."/>
            <person name="Cherry J.M."/>
        </authorList>
    </citation>
    <scope>GENOME REANNOTATION</scope>
    <source>
        <strain>ATCC 204508 / S288c</strain>
    </source>
</reference>
<reference key="3">
    <citation type="journal article" date="1996" name="J. Biol. Chem.">
        <title>Mutation of the Rab6 homologue of Saccharomyces cerevisiae, YPT6, inhibits both early Golgi function and ribosome biosynthesis.</title>
        <authorList>
            <person name="Li B."/>
            <person name="Warner J.R."/>
        </authorList>
    </citation>
    <scope>FUNCTION</scope>
</reference>
<reference key="4">
    <citation type="journal article" date="1999" name="Mol. Biol. Cell">
        <title>Structural and functional analysis of a novel coiled-coil protein involved in Ypt6 GTPase-regulated protein transport in yeast.</title>
        <authorList>
            <person name="Tsukada M."/>
            <person name="Will E."/>
            <person name="Gallwitz D."/>
        </authorList>
    </citation>
    <scope>FUNCTION</scope>
    <scope>SUBUNIT</scope>
    <scope>SUBCELLULAR LOCATION</scope>
</reference>
<reference key="5">
    <citation type="journal article" date="1999" name="Curr. Biol.">
        <title>The GRIP domain - a novel Golgi-targeting domain found in several coiled-coil proteins.</title>
        <authorList>
            <person name="Munro S."/>
            <person name="Nichols B.J."/>
        </authorList>
    </citation>
    <scope>DOMAIN</scope>
    <scope>SUBCELLULAR LOCATION</scope>
</reference>
<reference key="6">
    <citation type="journal article" date="1999" name="Curr. Biol.">
        <title>A novel Golgi-localisation domain shared by a class of coiled-coil peripheral membrane proteins.</title>
        <authorList>
            <person name="Kjer-Nielsen L."/>
            <person name="Teasdale R.D."/>
            <person name="van Vliet C."/>
            <person name="Gleeson P.A."/>
        </authorList>
    </citation>
    <scope>DOMAIN</scope>
</reference>
<reference key="7">
    <citation type="journal article" date="2002" name="Appl. Environ. Microbiol.">
        <title>Gene expression analysis of cold and freeze stress in Baker's yeast.</title>
        <authorList>
            <person name="Rodriguez-Vargas S."/>
            <person name="Estruch F."/>
            <person name="Randez-Gil F."/>
        </authorList>
    </citation>
    <scope>INDUCTION</scope>
</reference>
<reference key="8">
    <citation type="journal article" date="2003" name="Curr. Biol.">
        <title>Golgi recruitment of GRIP domain proteins by Arf-like GTPase 1 is regulated by Arf-like GTPase 3.</title>
        <authorList>
            <person name="Setty S.R.G."/>
            <person name="Shin M.E."/>
            <person name="Yoshino A."/>
            <person name="Marks M.S."/>
            <person name="Burd C.G."/>
        </authorList>
    </citation>
    <scope>INTERACTION WITH ARL1</scope>
    <scope>SUBCELLULAR LOCATION</scope>
</reference>
<reference key="9">
    <citation type="journal article" date="2003" name="Curr. Biol.">
        <title>The ARF-like GTPases Arl1p and Arl3p act in a pathway that interacts with vesicle-tethering factors at the Golgi apparatus.</title>
        <authorList>
            <person name="Panic B."/>
            <person name="Whyte J.R.C."/>
            <person name="Munro S."/>
        </authorList>
    </citation>
    <scope>INTERACTION WITH ARL1</scope>
    <scope>SUBCELLULAR LOCATION</scope>
    <scope>MUTAGENESIS OF TYR-870</scope>
</reference>
<reference key="10">
    <citation type="journal article" date="2003" name="Mol. Cell">
        <title>Assigning function to yeast proteins by integration of technologies.</title>
        <authorList>
            <person name="Hazbun T.R."/>
            <person name="Malmstroem L."/>
            <person name="Anderson S."/>
            <person name="Graczyk B.J."/>
            <person name="Fox B."/>
            <person name="Riffle M."/>
            <person name="Sundin B.A."/>
            <person name="Aranda J.D."/>
            <person name="McDonald W.H."/>
            <person name="Chiu C.-H."/>
            <person name="Snydsman B.E."/>
            <person name="Bradley P."/>
            <person name="Muller E.G.D."/>
            <person name="Fields S."/>
            <person name="Baker D."/>
            <person name="Yates J.R. III"/>
            <person name="Davis T.N."/>
        </authorList>
    </citation>
    <scope>IDENTIFICATION BY MASS SPECTROMETRY</scope>
</reference>
<reference key="11">
    <citation type="journal article" date="2003" name="Nature">
        <title>Global analysis of protein localization in budding yeast.</title>
        <authorList>
            <person name="Huh W.-K."/>
            <person name="Falvo J.V."/>
            <person name="Gerke L.C."/>
            <person name="Carroll A.S."/>
            <person name="Howson R.W."/>
            <person name="Weissman J.S."/>
            <person name="O'Shea E.K."/>
        </authorList>
    </citation>
    <scope>SUBCELLULAR LOCATION [LARGE SCALE ANALYSIS]</scope>
</reference>
<reference key="12">
    <citation type="journal article" date="2003" name="Nature">
        <title>Global analysis of protein expression in yeast.</title>
        <authorList>
            <person name="Ghaemmaghami S."/>
            <person name="Huh W.-K."/>
            <person name="Bower K."/>
            <person name="Howson R.W."/>
            <person name="Belle A."/>
            <person name="Dephoure N."/>
            <person name="O'Shea E.K."/>
            <person name="Weissman J.S."/>
        </authorList>
    </citation>
    <scope>LEVEL OF PROTEIN EXPRESSION [LARGE SCALE ANALYSIS]</scope>
</reference>
<reference key="13">
    <citation type="journal article" date="2004" name="Nat. Cell Biol.">
        <title>Targeting of the Arf-like GTPase Arl3p to the Golgi requires N-terminal acetylation and the membrane protein Sys1p.</title>
        <authorList>
            <person name="Behnia R."/>
            <person name="Panic B."/>
            <person name="Whyte J.R.C."/>
            <person name="Munro S."/>
        </authorList>
    </citation>
    <scope>SUBCELLULAR LOCATION</scope>
</reference>
<reference key="14">
    <citation type="journal article" date="2005" name="Mol. Cell. Proteomics">
        <title>Quantitative phosphoproteomics applied to the yeast pheromone signaling pathway.</title>
        <authorList>
            <person name="Gruhler A."/>
            <person name="Olsen J.V."/>
            <person name="Mohammed S."/>
            <person name="Mortensen P."/>
            <person name="Faergeman N.J."/>
            <person name="Mann M."/>
            <person name="Jensen O.N."/>
        </authorList>
    </citation>
    <scope>PHOSPHORYLATION [LARGE SCALE ANALYSIS] AT SER-827</scope>
    <scope>IDENTIFICATION BY MASS SPECTROMETRY [LARGE SCALE ANALYSIS]</scope>
    <source>
        <strain>YAL6B</strain>
    </source>
</reference>
<reference key="15">
    <citation type="journal article" date="2007" name="J. Proteome Res.">
        <title>Large-scale phosphorylation analysis of alpha-factor-arrested Saccharomyces cerevisiae.</title>
        <authorList>
            <person name="Li X."/>
            <person name="Gerber S.A."/>
            <person name="Rudner A.D."/>
            <person name="Beausoleil S.A."/>
            <person name="Haas W."/>
            <person name="Villen J."/>
            <person name="Elias J.E."/>
            <person name="Gygi S.P."/>
        </authorList>
    </citation>
    <scope>PHOSPHORYLATION [LARGE SCALE ANALYSIS] AT SER-308</scope>
    <scope>IDENTIFICATION BY MASS SPECTROMETRY [LARGE SCALE ANALYSIS]</scope>
    <source>
        <strain>ADR376</strain>
    </source>
</reference>
<reference key="16">
    <citation type="journal article" date="2008" name="Mol. Cell. Proteomics">
        <title>A multidimensional chromatography technology for in-depth phosphoproteome analysis.</title>
        <authorList>
            <person name="Albuquerque C.P."/>
            <person name="Smolka M.B."/>
            <person name="Payne S.H."/>
            <person name="Bafna V."/>
            <person name="Eng J."/>
            <person name="Zhou H."/>
        </authorList>
    </citation>
    <scope>PHOSPHORYLATION [LARGE SCALE ANALYSIS] AT SER-308 AND SER-660</scope>
    <scope>IDENTIFICATION BY MASS SPECTROMETRY [LARGE SCALE ANALYSIS]</scope>
</reference>
<reference key="17">
    <citation type="journal article" date="2009" name="Science">
        <title>Global analysis of Cdk1 substrate phosphorylation sites provides insights into evolution.</title>
        <authorList>
            <person name="Holt L.J."/>
            <person name="Tuch B.B."/>
            <person name="Villen J."/>
            <person name="Johnson A.D."/>
            <person name="Gygi S.P."/>
            <person name="Morgan D.O."/>
        </authorList>
    </citation>
    <scope>PHOSPHORYLATION [LARGE SCALE ANALYSIS] AT SER-308; SER-827 AND THR-830</scope>
    <scope>IDENTIFICATION BY MASS SPECTROMETRY [LARGE SCALE ANALYSIS]</scope>
</reference>
<evidence type="ECO:0000255" key="1"/>
<evidence type="ECO:0000255" key="2">
    <source>
        <dbReference type="PROSITE-ProRule" id="PRU00250"/>
    </source>
</evidence>
<evidence type="ECO:0000256" key="3">
    <source>
        <dbReference type="SAM" id="MobiDB-lite"/>
    </source>
</evidence>
<evidence type="ECO:0000269" key="4">
    <source>
    </source>
</evidence>
<evidence type="ECO:0000269" key="5">
    <source>
    </source>
</evidence>
<evidence type="ECO:0000269" key="6">
    <source>
    </source>
</evidence>
<evidence type="ECO:0000269" key="7">
    <source>
    </source>
</evidence>
<evidence type="ECO:0000269" key="8">
    <source>
    </source>
</evidence>
<evidence type="ECO:0000269" key="9">
    <source>
    </source>
</evidence>
<evidence type="ECO:0000269" key="10">
    <source>
    </source>
</evidence>
<evidence type="ECO:0000269" key="11">
    <source>
    </source>
</evidence>
<evidence type="ECO:0007744" key="12">
    <source>
    </source>
</evidence>
<evidence type="ECO:0007744" key="13">
    <source>
    </source>
</evidence>
<evidence type="ECO:0007744" key="14">
    <source>
    </source>
</evidence>
<evidence type="ECO:0007744" key="15">
    <source>
    </source>
</evidence>
<name>IMH1_YEAST</name>